<comment type="function">
    <text evidence="1">The glycine cleavage system catalyzes the degradation of glycine. The P protein binds the alpha-amino group of glycine through its pyridoxal phosphate cofactor; CO(2) is released and the remaining methylamine moiety is then transferred to the lipoamide cofactor of the H protein.</text>
</comment>
<comment type="catalytic activity">
    <reaction evidence="1">
        <text>N(6)-[(R)-lipoyl]-L-lysyl-[glycine-cleavage complex H protein] + glycine + H(+) = N(6)-[(R)-S(8)-aminomethyldihydrolipoyl]-L-lysyl-[glycine-cleavage complex H protein] + CO2</text>
        <dbReference type="Rhea" id="RHEA:24304"/>
        <dbReference type="Rhea" id="RHEA-COMP:10494"/>
        <dbReference type="Rhea" id="RHEA-COMP:10495"/>
        <dbReference type="ChEBI" id="CHEBI:15378"/>
        <dbReference type="ChEBI" id="CHEBI:16526"/>
        <dbReference type="ChEBI" id="CHEBI:57305"/>
        <dbReference type="ChEBI" id="CHEBI:83099"/>
        <dbReference type="ChEBI" id="CHEBI:83143"/>
        <dbReference type="EC" id="1.4.4.2"/>
    </reaction>
</comment>
<comment type="cofactor">
    <cofactor evidence="1">
        <name>pyridoxal 5'-phosphate</name>
        <dbReference type="ChEBI" id="CHEBI:597326"/>
    </cofactor>
</comment>
<comment type="subunit">
    <text evidence="1">The glycine cleavage system is composed of four proteins: P, T, L and H. In this organism, the P 'protein' is a heterodimer of two subunits.</text>
</comment>
<comment type="similarity">
    <text evidence="1">Belongs to the GcvP family. C-terminal subunit subfamily.</text>
</comment>
<proteinExistence type="inferred from homology"/>
<reference key="1">
    <citation type="submission" date="2008-10" db="EMBL/GenBank/DDBJ databases">
        <title>Genome sequence of Bacillus cereus AH187.</title>
        <authorList>
            <person name="Dodson R.J."/>
            <person name="Durkin A.S."/>
            <person name="Rosovitz M.J."/>
            <person name="Rasko D.A."/>
            <person name="Kolsto A.B."/>
            <person name="Okstad O.A."/>
            <person name="Ravel J."/>
            <person name="Sutton G."/>
        </authorList>
    </citation>
    <scope>NUCLEOTIDE SEQUENCE [LARGE SCALE GENOMIC DNA]</scope>
    <source>
        <strain>AH187</strain>
    </source>
</reference>
<name>GCSPB_BACC7</name>
<feature type="chain" id="PRO_1000132494" description="Probable glycine dehydrogenase (decarboxylating) subunit 2">
    <location>
        <begin position="1"/>
        <end position="491"/>
    </location>
</feature>
<feature type="modified residue" description="N6-(pyridoxal phosphate)lysine" evidence="1">
    <location>
        <position position="273"/>
    </location>
</feature>
<organism>
    <name type="scientific">Bacillus cereus (strain AH187)</name>
    <dbReference type="NCBI Taxonomy" id="405534"/>
    <lineage>
        <taxon>Bacteria</taxon>
        <taxon>Bacillati</taxon>
        <taxon>Bacillota</taxon>
        <taxon>Bacilli</taxon>
        <taxon>Bacillales</taxon>
        <taxon>Bacillaceae</taxon>
        <taxon>Bacillus</taxon>
        <taxon>Bacillus cereus group</taxon>
    </lineage>
</organism>
<accession>B7HNY9</accession>
<sequence length="491" mass="54923">MKNQDQALIFEVSKEGRIGYSLPKLDVEEVKLEDVFESDYIRVEDAELPEVSELDIMRHYTALSNRNHGVDSGFYPLGSCTMKYNPKINESVARFAGFANIHPLQDEKTVQGAMELMYDLQEHLIEITGMDTVTLQPAAGAHGEWTGLMLIRAYHEANGDFNRTKVIVPDSAHGTNPASATVAGFETITVKSNEHGLVDLEDLKRVVNEETAALMLTNPNTLGLFEENILEMAEIVHNAGGKLYYDGANLNAVLSQARPGDMGFDVVHLNLHKTFTGPHGGGGPGSGPVGVKADLIPYLPKPILEKTENGYHFNYDRPEAIGRVKPFYGNFGINVRAYTYIRSMGPDGLRAVTEYAVLNANYMMRRLAPFYDLPFDRHCKHEFVLSGRRQKKLGVRTLDIAKRLLDFGYHPPTIYFPLNVEECIMIEPTETESKETLDGFIDKMIQIAKEVEENPEVVQEAPHTTVIKRLDETMAARKPVLRYEKPAPVQV</sequence>
<dbReference type="EC" id="1.4.4.2" evidence="1"/>
<dbReference type="EMBL" id="CP001177">
    <property type="protein sequence ID" value="ACJ80737.1"/>
    <property type="molecule type" value="Genomic_DNA"/>
</dbReference>
<dbReference type="SMR" id="B7HNY9"/>
<dbReference type="KEGG" id="bcr:BCAH187_A4356"/>
<dbReference type="HOGENOM" id="CLU_004620_5_0_9"/>
<dbReference type="Proteomes" id="UP000002214">
    <property type="component" value="Chromosome"/>
</dbReference>
<dbReference type="GO" id="GO:0005829">
    <property type="term" value="C:cytosol"/>
    <property type="evidence" value="ECO:0007669"/>
    <property type="project" value="TreeGrafter"/>
</dbReference>
<dbReference type="GO" id="GO:0005960">
    <property type="term" value="C:glycine cleavage complex"/>
    <property type="evidence" value="ECO:0007669"/>
    <property type="project" value="TreeGrafter"/>
</dbReference>
<dbReference type="GO" id="GO:0016594">
    <property type="term" value="F:glycine binding"/>
    <property type="evidence" value="ECO:0007669"/>
    <property type="project" value="TreeGrafter"/>
</dbReference>
<dbReference type="GO" id="GO:0004375">
    <property type="term" value="F:glycine dehydrogenase (decarboxylating) activity"/>
    <property type="evidence" value="ECO:0007669"/>
    <property type="project" value="UniProtKB-EC"/>
</dbReference>
<dbReference type="GO" id="GO:0030170">
    <property type="term" value="F:pyridoxal phosphate binding"/>
    <property type="evidence" value="ECO:0007669"/>
    <property type="project" value="TreeGrafter"/>
</dbReference>
<dbReference type="GO" id="GO:0019464">
    <property type="term" value="P:glycine decarboxylation via glycine cleavage system"/>
    <property type="evidence" value="ECO:0007669"/>
    <property type="project" value="UniProtKB-UniRule"/>
</dbReference>
<dbReference type="CDD" id="cd00613">
    <property type="entry name" value="GDC-P"/>
    <property type="match status" value="1"/>
</dbReference>
<dbReference type="FunFam" id="3.40.640.10:FF:000034">
    <property type="entry name" value="Probable glycine dehydrogenase (decarboxylating) subunit 2"/>
    <property type="match status" value="1"/>
</dbReference>
<dbReference type="FunFam" id="3.90.1150.10:FF:000014">
    <property type="entry name" value="Probable glycine dehydrogenase (decarboxylating) subunit 2"/>
    <property type="match status" value="1"/>
</dbReference>
<dbReference type="Gene3D" id="6.20.440.10">
    <property type="match status" value="1"/>
</dbReference>
<dbReference type="Gene3D" id="3.90.1150.10">
    <property type="entry name" value="Aspartate Aminotransferase, domain 1"/>
    <property type="match status" value="1"/>
</dbReference>
<dbReference type="Gene3D" id="3.40.640.10">
    <property type="entry name" value="Type I PLP-dependent aspartate aminotransferase-like (Major domain)"/>
    <property type="match status" value="1"/>
</dbReference>
<dbReference type="HAMAP" id="MF_00713">
    <property type="entry name" value="GcvPB"/>
    <property type="match status" value="1"/>
</dbReference>
<dbReference type="InterPro" id="IPR023012">
    <property type="entry name" value="GcvPB"/>
</dbReference>
<dbReference type="InterPro" id="IPR049316">
    <property type="entry name" value="GDC-P_C"/>
</dbReference>
<dbReference type="InterPro" id="IPR049315">
    <property type="entry name" value="GDC-P_N"/>
</dbReference>
<dbReference type="InterPro" id="IPR020581">
    <property type="entry name" value="GDC_P"/>
</dbReference>
<dbReference type="InterPro" id="IPR015424">
    <property type="entry name" value="PyrdxlP-dep_Trfase"/>
</dbReference>
<dbReference type="InterPro" id="IPR015421">
    <property type="entry name" value="PyrdxlP-dep_Trfase_major"/>
</dbReference>
<dbReference type="InterPro" id="IPR015422">
    <property type="entry name" value="PyrdxlP-dep_Trfase_small"/>
</dbReference>
<dbReference type="NCBIfam" id="NF003346">
    <property type="entry name" value="PRK04366.1"/>
    <property type="match status" value="1"/>
</dbReference>
<dbReference type="PANTHER" id="PTHR11773:SF1">
    <property type="entry name" value="GLYCINE DEHYDROGENASE (DECARBOXYLATING), MITOCHONDRIAL"/>
    <property type="match status" value="1"/>
</dbReference>
<dbReference type="PANTHER" id="PTHR11773">
    <property type="entry name" value="GLYCINE DEHYDROGENASE, DECARBOXYLATING"/>
    <property type="match status" value="1"/>
</dbReference>
<dbReference type="Pfam" id="PF21478">
    <property type="entry name" value="GcvP2_C"/>
    <property type="match status" value="1"/>
</dbReference>
<dbReference type="Pfam" id="PF02347">
    <property type="entry name" value="GDC-P"/>
    <property type="match status" value="1"/>
</dbReference>
<dbReference type="SUPFAM" id="SSF53383">
    <property type="entry name" value="PLP-dependent transferases"/>
    <property type="match status" value="1"/>
</dbReference>
<evidence type="ECO:0000255" key="1">
    <source>
        <dbReference type="HAMAP-Rule" id="MF_00713"/>
    </source>
</evidence>
<protein>
    <recommendedName>
        <fullName evidence="1">Probable glycine dehydrogenase (decarboxylating) subunit 2</fullName>
        <ecNumber evidence="1">1.4.4.2</ecNumber>
    </recommendedName>
    <alternativeName>
        <fullName evidence="1">Glycine cleavage system P-protein subunit 2</fullName>
    </alternativeName>
    <alternativeName>
        <fullName evidence="1">Glycine decarboxylase subunit 2</fullName>
    </alternativeName>
    <alternativeName>
        <fullName evidence="1">Glycine dehydrogenase (aminomethyl-transferring) subunit 2</fullName>
    </alternativeName>
</protein>
<gene>
    <name evidence="1" type="primary">gcvPB</name>
    <name type="ordered locus">BCAH187_A4356</name>
</gene>
<keyword id="KW-0560">Oxidoreductase</keyword>
<keyword id="KW-0663">Pyridoxal phosphate</keyword>